<accession>A7H513</accession>
<comment type="function">
    <text evidence="1">This protein specifically catalyzes the removal of signal peptides from prolipoproteins.</text>
</comment>
<comment type="catalytic activity">
    <reaction evidence="1">
        <text>Release of signal peptides from bacterial membrane prolipoproteins. Hydrolyzes -Xaa-Yaa-Zaa-|-(S,diacylglyceryl)Cys-, in which Xaa is hydrophobic (preferably Leu), and Yaa (Ala or Ser) and Zaa (Gly or Ala) have small, neutral side chains.</text>
        <dbReference type="EC" id="3.4.23.36"/>
    </reaction>
</comment>
<comment type="pathway">
    <text evidence="1">Protein modification; lipoprotein biosynthesis (signal peptide cleavage).</text>
</comment>
<comment type="subcellular location">
    <subcellularLocation>
        <location evidence="1">Cell inner membrane</location>
        <topology evidence="1">Multi-pass membrane protein</topology>
    </subcellularLocation>
</comment>
<comment type="similarity">
    <text evidence="1">Belongs to the peptidase A8 family.</text>
</comment>
<feature type="chain" id="PRO_1000097242" description="Lipoprotein signal peptidase">
    <location>
        <begin position="1"/>
        <end position="156"/>
    </location>
</feature>
<feature type="transmembrane region" description="Helical" evidence="1">
    <location>
        <begin position="5"/>
        <end position="25"/>
    </location>
</feature>
<feature type="transmembrane region" description="Helical" evidence="1">
    <location>
        <begin position="64"/>
        <end position="84"/>
    </location>
</feature>
<feature type="transmembrane region" description="Helical" evidence="1">
    <location>
        <begin position="89"/>
        <end position="109"/>
    </location>
</feature>
<feature type="transmembrane region" description="Helical" evidence="1">
    <location>
        <begin position="122"/>
        <end position="142"/>
    </location>
</feature>
<feature type="active site" evidence="1">
    <location>
        <position position="113"/>
    </location>
</feature>
<feature type="active site" evidence="1">
    <location>
        <position position="130"/>
    </location>
</feature>
<evidence type="ECO:0000255" key="1">
    <source>
        <dbReference type="HAMAP-Rule" id="MF_00161"/>
    </source>
</evidence>
<gene>
    <name evidence="1" type="primary">lspA</name>
    <name type="ordered locus">JJD26997_1596</name>
</gene>
<keyword id="KW-0064">Aspartyl protease</keyword>
<keyword id="KW-0997">Cell inner membrane</keyword>
<keyword id="KW-1003">Cell membrane</keyword>
<keyword id="KW-0378">Hydrolase</keyword>
<keyword id="KW-0472">Membrane</keyword>
<keyword id="KW-0645">Protease</keyword>
<keyword id="KW-0812">Transmembrane</keyword>
<keyword id="KW-1133">Transmembrane helix</keyword>
<protein>
    <recommendedName>
        <fullName evidence="1">Lipoprotein signal peptidase</fullName>
        <ecNumber evidence="1">3.4.23.36</ecNumber>
    </recommendedName>
    <alternativeName>
        <fullName evidence="1">Prolipoprotein signal peptidase</fullName>
    </alternativeName>
    <alternativeName>
        <fullName evidence="1">Signal peptidase II</fullName>
        <shortName evidence="1">SPase II</shortName>
    </alternativeName>
</protein>
<sequence>MAKTFKFIFYFWGAFVLVFALDQWVKSLTLAGLRWQSKYLDLTYALNTGVAFSMLSFLEHNLKYLHLALIGVLFIYLFWQKTLLKTHSIAFGMMLGAGVSNLLDRFIYGGVVDMFFWHKWFNFAIFNVADVMINISVALILIQEIFKKRKKDDRMD</sequence>
<organism>
    <name type="scientific">Campylobacter jejuni subsp. doylei (strain ATCC BAA-1458 / RM4099 / 269.97)</name>
    <dbReference type="NCBI Taxonomy" id="360109"/>
    <lineage>
        <taxon>Bacteria</taxon>
        <taxon>Pseudomonadati</taxon>
        <taxon>Campylobacterota</taxon>
        <taxon>Epsilonproteobacteria</taxon>
        <taxon>Campylobacterales</taxon>
        <taxon>Campylobacteraceae</taxon>
        <taxon>Campylobacter</taxon>
    </lineage>
</organism>
<dbReference type="EC" id="3.4.23.36" evidence="1"/>
<dbReference type="EMBL" id="CP000768">
    <property type="protein sequence ID" value="ABS43452.1"/>
    <property type="molecule type" value="Genomic_DNA"/>
</dbReference>
<dbReference type="SMR" id="A7H513"/>
<dbReference type="KEGG" id="cjd:JJD26997_1596"/>
<dbReference type="HOGENOM" id="CLU_083252_4_3_7"/>
<dbReference type="UniPathway" id="UPA00665"/>
<dbReference type="Proteomes" id="UP000002302">
    <property type="component" value="Chromosome"/>
</dbReference>
<dbReference type="GO" id="GO:0005886">
    <property type="term" value="C:plasma membrane"/>
    <property type="evidence" value="ECO:0007669"/>
    <property type="project" value="UniProtKB-SubCell"/>
</dbReference>
<dbReference type="GO" id="GO:0004190">
    <property type="term" value="F:aspartic-type endopeptidase activity"/>
    <property type="evidence" value="ECO:0007669"/>
    <property type="project" value="UniProtKB-UniRule"/>
</dbReference>
<dbReference type="GO" id="GO:0006508">
    <property type="term" value="P:proteolysis"/>
    <property type="evidence" value="ECO:0007669"/>
    <property type="project" value="UniProtKB-KW"/>
</dbReference>
<dbReference type="HAMAP" id="MF_00161">
    <property type="entry name" value="LspA"/>
    <property type="match status" value="1"/>
</dbReference>
<dbReference type="InterPro" id="IPR001872">
    <property type="entry name" value="Peptidase_A8"/>
</dbReference>
<dbReference type="NCBIfam" id="TIGR00077">
    <property type="entry name" value="lspA"/>
    <property type="match status" value="1"/>
</dbReference>
<dbReference type="PANTHER" id="PTHR33695">
    <property type="entry name" value="LIPOPROTEIN SIGNAL PEPTIDASE"/>
    <property type="match status" value="1"/>
</dbReference>
<dbReference type="PANTHER" id="PTHR33695:SF1">
    <property type="entry name" value="LIPOPROTEIN SIGNAL PEPTIDASE"/>
    <property type="match status" value="1"/>
</dbReference>
<dbReference type="Pfam" id="PF01252">
    <property type="entry name" value="Peptidase_A8"/>
    <property type="match status" value="1"/>
</dbReference>
<dbReference type="PRINTS" id="PR00781">
    <property type="entry name" value="LIPOSIGPTASE"/>
</dbReference>
<dbReference type="PROSITE" id="PS00855">
    <property type="entry name" value="SPASE_II"/>
    <property type="match status" value="1"/>
</dbReference>
<proteinExistence type="inferred from homology"/>
<reference key="1">
    <citation type="submission" date="2007-07" db="EMBL/GenBank/DDBJ databases">
        <title>Complete genome sequence of Campylobacter jejuni subsp doylei 269.97 isolated from human blood.</title>
        <authorList>
            <person name="Fouts D.E."/>
            <person name="Mongodin E.F."/>
            <person name="Puiu D."/>
            <person name="Sebastian Y."/>
            <person name="Miller W.G."/>
            <person name="Mandrell R.E."/>
            <person name="Lastovica A.J."/>
            <person name="Nelson K.E."/>
        </authorList>
    </citation>
    <scope>NUCLEOTIDE SEQUENCE [LARGE SCALE GENOMIC DNA]</scope>
    <source>
        <strain>ATCC BAA-1458 / RM4099 / 269.97</strain>
    </source>
</reference>
<name>LSPA_CAMJD</name>